<name>TAA7D_RAT</name>
<protein>
    <recommendedName>
        <fullName>Trace amine-associated receptor 7d</fullName>
        <shortName>TaR-7d</shortName>
        <shortName>Trace amine receptor 7d</shortName>
    </recommendedName>
    <alternativeName>
        <fullName evidence="6">Trace amine receptor 15</fullName>
        <shortName evidence="6">TaR-15</shortName>
    </alternativeName>
</protein>
<evidence type="ECO:0000250" key="1">
    <source>
        <dbReference type="UniProtKB" id="Q5QD04"/>
    </source>
</evidence>
<evidence type="ECO:0000255" key="2"/>
<evidence type="ECO:0000255" key="3">
    <source>
        <dbReference type="PROSITE-ProRule" id="PRU00521"/>
    </source>
</evidence>
<evidence type="ECO:0000269" key="4">
    <source>
    </source>
</evidence>
<evidence type="ECO:0000269" key="5">
    <source>
    </source>
</evidence>
<evidence type="ECO:0000303" key="6">
    <source>
    </source>
</evidence>
<evidence type="ECO:0000303" key="7">
    <source>
    </source>
</evidence>
<evidence type="ECO:0000305" key="8"/>
<evidence type="ECO:0000312" key="9">
    <source>
        <dbReference type="RGD" id="631395"/>
    </source>
</evidence>
<keyword id="KW-1003">Cell membrane</keyword>
<keyword id="KW-1015">Disulfide bond</keyword>
<keyword id="KW-0297">G-protein coupled receptor</keyword>
<keyword id="KW-0325">Glycoprotein</keyword>
<keyword id="KW-0472">Membrane</keyword>
<keyword id="KW-0675">Receptor</keyword>
<keyword id="KW-1185">Reference proteome</keyword>
<keyword id="KW-0807">Transducer</keyword>
<keyword id="KW-0812">Transmembrane</keyword>
<keyword id="KW-1133">Transmembrane helix</keyword>
<gene>
    <name evidence="7 9" type="primary">Taar7d</name>
    <name evidence="6" type="synonym">Ta15</name>
    <name evidence="6" type="synonym">Tar15</name>
    <name evidence="6" type="synonym">Trar15</name>
</gene>
<reference key="1">
    <citation type="journal article" date="2001" name="Proc. Natl. Acad. Sci. U.S.A.">
        <title>Trace amines: identification of a family of mammalian G protein-coupled receptors.</title>
        <authorList>
            <person name="Borowsky B."/>
            <person name="Adham N."/>
            <person name="Jones K.A."/>
            <person name="Raddatz R."/>
            <person name="Artymyshyn R."/>
            <person name="Ogozalek K.L."/>
            <person name="Durkin M.M."/>
            <person name="Lakhlani P.P."/>
            <person name="Bonini J.A."/>
            <person name="Pathirana S."/>
            <person name="Boyle N."/>
            <person name="Pu X."/>
            <person name="Kouranova E."/>
            <person name="Lichtblau H."/>
            <person name="Ochoa F.Y."/>
            <person name="Branchek T.A."/>
            <person name="Gerald C."/>
        </authorList>
    </citation>
    <scope>NUCLEOTIDE SEQUENCE [GENOMIC DNA]</scope>
    <source>
        <strain>Sprague-Dawley</strain>
    </source>
</reference>
<reference key="2">
    <citation type="journal article" date="2012" name="ACS Chem. Biol.">
        <title>Agonists for 13 trace amine-associated receptors provide insight into the molecular basis of odor selectivity.</title>
        <authorList>
            <person name="Ferrero D.M."/>
            <person name="Wacker D."/>
            <person name="Roque M.A."/>
            <person name="Baldwin M.W."/>
            <person name="Stevens R.C."/>
            <person name="Liberles S.D."/>
        </authorList>
    </citation>
    <scope>FUNCTION</scope>
</reference>
<reference key="3">
    <citation type="journal article" date="2023" name="Nature">
        <title>Structural basis of amine odorant perception by a mammal olfactory receptor.</title>
        <authorList>
            <person name="Guo L."/>
            <person name="Cheng J."/>
            <person name="Lian S."/>
            <person name="Liu Q."/>
            <person name="Lu Y."/>
            <person name="Zheng Y."/>
            <person name="Zhu K."/>
            <person name="Zhang M."/>
            <person name="Kong Y."/>
            <person name="Zhang C."/>
            <person name="Rong N."/>
            <person name="Zhuang Y."/>
            <person name="Fang G."/>
            <person name="Jiang J."/>
            <person name="Zhang T."/>
            <person name="Han X."/>
            <person name="Liu Z."/>
            <person name="Xia M."/>
            <person name="Liu S."/>
            <person name="Zhang L."/>
            <person name="Liberles S.D."/>
            <person name="Yu X."/>
            <person name="Xu Y."/>
            <person name="Yang F."/>
            <person name="Li Q."/>
            <person name="Sun J.P."/>
        </authorList>
    </citation>
    <scope>SUBCELLULAR LOCATION</scope>
</reference>
<proteinExistence type="inferred from homology"/>
<comment type="function">
    <text evidence="4 8">Olfactory receptor specific for N,N-dimethylalkylamines trace amines, such as N,N-dimethylcyclohexylamine (PubMed:22545963). Trace amine compounds are enriched in animal body fluids and act on trace amine-associated receptors (TAARs) to elicit both intraspecific and interspecific innate behaviors (PubMed:22545963). Ligand-binding causes a conformation change that triggers signaling via G(s)-class of G alpha proteins (GNAL or GNAS) (Probable).</text>
</comment>
<comment type="subcellular location">
    <subcellularLocation>
        <location evidence="5">Cell membrane</location>
        <topology evidence="2">Multi-pass membrane protein</topology>
    </subcellularLocation>
</comment>
<comment type="domain">
    <text evidence="1">In addition to the well known disulfide bond common to G-protein coupled receptor 1 family, trace amine-associated receptors (TAARs) contain an unique disulfide bond (Cys-37-Cys-201) connecting the N-terminus to the extracellular Loop 2 (ECL2), which is required for agonist-induced receptor activation.</text>
</comment>
<comment type="similarity">
    <text evidence="3">Belongs to the G-protein coupled receptor 1 family.</text>
</comment>
<dbReference type="EMBL" id="AF380203">
    <property type="protein sequence ID" value="AAK71254.1"/>
    <property type="molecule type" value="Genomic_DNA"/>
</dbReference>
<dbReference type="SMR" id="Q923X5"/>
<dbReference type="FunCoup" id="Q923X5">
    <property type="interactions" value="32"/>
</dbReference>
<dbReference type="STRING" id="10116.ENSRNOP00000049417"/>
<dbReference type="GlyCosmos" id="Q923X5">
    <property type="glycosylation" value="1 site, No reported glycans"/>
</dbReference>
<dbReference type="GlyGen" id="Q923X5">
    <property type="glycosylation" value="1 site"/>
</dbReference>
<dbReference type="PhosphoSitePlus" id="Q923X5"/>
<dbReference type="PaxDb" id="10116-ENSRNOP00000049417"/>
<dbReference type="AGR" id="RGD:631395"/>
<dbReference type="RGD" id="631395">
    <property type="gene designation" value="Taar7d"/>
</dbReference>
<dbReference type="eggNOG" id="KOG3656">
    <property type="taxonomic scope" value="Eukaryota"/>
</dbReference>
<dbReference type="InParanoid" id="Q923X5"/>
<dbReference type="OrthoDB" id="5959645at2759"/>
<dbReference type="PhylomeDB" id="Q923X5"/>
<dbReference type="PRO" id="PR:Q923X5"/>
<dbReference type="Proteomes" id="UP000002494">
    <property type="component" value="Unplaced"/>
</dbReference>
<dbReference type="GO" id="GO:0005886">
    <property type="term" value="C:plasma membrane"/>
    <property type="evidence" value="ECO:0000314"/>
    <property type="project" value="UniProtKB"/>
</dbReference>
<dbReference type="GO" id="GO:0001594">
    <property type="term" value="F:trace-amine receptor activity"/>
    <property type="evidence" value="ECO:0000314"/>
    <property type="project" value="UniProtKB"/>
</dbReference>
<dbReference type="GO" id="GO:0007186">
    <property type="term" value="P:G protein-coupled receptor signaling pathway"/>
    <property type="evidence" value="ECO:0000318"/>
    <property type="project" value="GO_Central"/>
</dbReference>
<dbReference type="FunFam" id="1.20.1070.10:FF:000030">
    <property type="entry name" value="trace amine-associated receptor 1"/>
    <property type="match status" value="1"/>
</dbReference>
<dbReference type="Gene3D" id="1.20.1070.10">
    <property type="entry name" value="Rhodopsin 7-helix transmembrane proteins"/>
    <property type="match status" value="1"/>
</dbReference>
<dbReference type="InterPro" id="IPR000276">
    <property type="entry name" value="GPCR_Rhodpsn"/>
</dbReference>
<dbReference type="InterPro" id="IPR017452">
    <property type="entry name" value="GPCR_Rhodpsn_7TM"/>
</dbReference>
<dbReference type="InterPro" id="IPR050569">
    <property type="entry name" value="TAAR"/>
</dbReference>
<dbReference type="InterPro" id="IPR009132">
    <property type="entry name" value="TAAR_fam"/>
</dbReference>
<dbReference type="PANTHER" id="PTHR24249">
    <property type="entry name" value="HISTAMINE RECEPTOR-RELATED G-PROTEIN COUPLED RECEPTOR"/>
    <property type="match status" value="1"/>
</dbReference>
<dbReference type="PANTHER" id="PTHR24249:SF78">
    <property type="entry name" value="TRACE AMINE-ASSOCIATED RECEPTOR 7A-RELATED"/>
    <property type="match status" value="1"/>
</dbReference>
<dbReference type="Pfam" id="PF00001">
    <property type="entry name" value="7tm_1"/>
    <property type="match status" value="1"/>
</dbReference>
<dbReference type="PRINTS" id="PR00237">
    <property type="entry name" value="GPCRRHODOPSN"/>
</dbReference>
<dbReference type="PRINTS" id="PR01830">
    <property type="entry name" value="TRACEAMINER"/>
</dbReference>
<dbReference type="SMART" id="SM01381">
    <property type="entry name" value="7TM_GPCR_Srsx"/>
    <property type="match status" value="1"/>
</dbReference>
<dbReference type="SUPFAM" id="SSF81321">
    <property type="entry name" value="Family A G protein-coupled receptor-like"/>
    <property type="match status" value="1"/>
</dbReference>
<dbReference type="PROSITE" id="PS00237">
    <property type="entry name" value="G_PROTEIN_RECEP_F1_1"/>
    <property type="match status" value="1"/>
</dbReference>
<dbReference type="PROSITE" id="PS50262">
    <property type="entry name" value="G_PROTEIN_RECEP_F1_2"/>
    <property type="match status" value="1"/>
</dbReference>
<feature type="chain" id="PRO_0000070168" description="Trace amine-associated receptor 7d">
    <location>
        <begin position="1"/>
        <end position="358"/>
    </location>
</feature>
<feature type="topological domain" description="Extracellular" evidence="2">
    <location>
        <begin position="1"/>
        <end position="47"/>
    </location>
</feature>
<feature type="transmembrane region" description="Helical; Name=1" evidence="2">
    <location>
        <begin position="48"/>
        <end position="68"/>
    </location>
</feature>
<feature type="topological domain" description="Cytoplasmic" evidence="2">
    <location>
        <begin position="69"/>
        <end position="83"/>
    </location>
</feature>
<feature type="transmembrane region" description="Helical; Name=2" evidence="2">
    <location>
        <begin position="84"/>
        <end position="104"/>
    </location>
</feature>
<feature type="topological domain" description="Extracellular" evidence="2">
    <location>
        <begin position="105"/>
        <end position="122"/>
    </location>
</feature>
<feature type="transmembrane region" description="Helical; Name=3" evidence="2">
    <location>
        <begin position="123"/>
        <end position="143"/>
    </location>
</feature>
<feature type="topological domain" description="Cytoplasmic" evidence="2">
    <location>
        <begin position="144"/>
        <end position="166"/>
    </location>
</feature>
<feature type="transmembrane region" description="Helical; Name=4" evidence="2">
    <location>
        <begin position="167"/>
        <end position="187"/>
    </location>
</feature>
<feature type="topological domain" description="Extracellular" evidence="2">
    <location>
        <begin position="188"/>
        <end position="212"/>
    </location>
</feature>
<feature type="transmembrane region" description="Helical; Name=5" evidence="2">
    <location>
        <begin position="213"/>
        <end position="233"/>
    </location>
</feature>
<feature type="topological domain" description="Cytoplasmic" evidence="2">
    <location>
        <begin position="234"/>
        <end position="274"/>
    </location>
</feature>
<feature type="transmembrane region" description="Helical; Name=6" evidence="2">
    <location>
        <begin position="275"/>
        <end position="295"/>
    </location>
</feature>
<feature type="topological domain" description="Extracellular" evidence="2">
    <location>
        <begin position="296"/>
        <end position="309"/>
    </location>
</feature>
<feature type="transmembrane region" description="Helical; Name=7" evidence="2">
    <location>
        <begin position="310"/>
        <end position="333"/>
    </location>
</feature>
<feature type="topological domain" description="Cytoplasmic" evidence="2">
    <location>
        <begin position="334"/>
        <end position="358"/>
    </location>
</feature>
<feature type="glycosylation site" description="N-linked (GlcNAc...) asparagine" evidence="2">
    <location>
        <position position="34"/>
    </location>
</feature>
<feature type="disulfide bond" evidence="1">
    <location>
        <begin position="37"/>
        <end position="201"/>
    </location>
</feature>
<feature type="disulfide bond" evidence="3">
    <location>
        <begin position="120"/>
        <end position="205"/>
    </location>
</feature>
<accession>Q923X5</accession>
<organism>
    <name type="scientific">Rattus norvegicus</name>
    <name type="common">Rat</name>
    <dbReference type="NCBI Taxonomy" id="10116"/>
    <lineage>
        <taxon>Eukaryota</taxon>
        <taxon>Metazoa</taxon>
        <taxon>Chordata</taxon>
        <taxon>Craniata</taxon>
        <taxon>Vertebrata</taxon>
        <taxon>Euteleostomi</taxon>
        <taxon>Mammalia</taxon>
        <taxon>Eutheria</taxon>
        <taxon>Euarchontoglires</taxon>
        <taxon>Glires</taxon>
        <taxon>Rodentia</taxon>
        <taxon>Myomorpha</taxon>
        <taxon>Muroidea</taxon>
        <taxon>Muridae</taxon>
        <taxon>Murinae</taxon>
        <taxon>Rattus</taxon>
    </lineage>
</organism>
<sequence>MRVDDDRFPWDQDSILSRDLLSASSLQLCYENLNRSCVRSPYSPGPRLILYAVFGFGAVLAVCGNLMVMTSILHFRQLHSPANFLVASLACADFLVGLTVMPFSMVRSVEGCWYFGDTYCKLHTCFDVSFCYCSLFHLCFISVDRYIAVSDPLIYPTRFTASVSGKCITFSWLLSIIYGFPLIYTGASEAGLEDLVSALTCVGGCQIPMNQKFVLINFLLFLVPTLVMMTVYSKIFLIARQQAQNIEKMRKQTARASESYKDRVCKRERKAAKTLGIAVAAFLLSWLPYFIDSIIDAFLGFITPTYVYEILIWIVYYNSSMNPLIYAFFYPWFRKATKLIVTGKILRENSSTINLFPE</sequence>